<name>RL36_CALS8</name>
<sequence>MKVRPSVKPICEKCKVIRRKGKIRIICENPKHKQRQG</sequence>
<dbReference type="EMBL" id="CP000679">
    <property type="protein sequence ID" value="ABP67841.2"/>
    <property type="molecule type" value="Genomic_DNA"/>
</dbReference>
<dbReference type="RefSeq" id="WP_011917767.1">
    <property type="nucleotide sequence ID" value="NC_009437.1"/>
</dbReference>
<dbReference type="SMR" id="A4XLQ6"/>
<dbReference type="STRING" id="351627.Csac_2263"/>
<dbReference type="GeneID" id="31773078"/>
<dbReference type="KEGG" id="csc:Csac_2263"/>
<dbReference type="eggNOG" id="COG0257">
    <property type="taxonomic scope" value="Bacteria"/>
</dbReference>
<dbReference type="HOGENOM" id="CLU_135723_6_2_9"/>
<dbReference type="Proteomes" id="UP000000256">
    <property type="component" value="Chromosome"/>
</dbReference>
<dbReference type="GO" id="GO:0005737">
    <property type="term" value="C:cytoplasm"/>
    <property type="evidence" value="ECO:0007669"/>
    <property type="project" value="UniProtKB-ARBA"/>
</dbReference>
<dbReference type="GO" id="GO:1990904">
    <property type="term" value="C:ribonucleoprotein complex"/>
    <property type="evidence" value="ECO:0007669"/>
    <property type="project" value="UniProtKB-KW"/>
</dbReference>
<dbReference type="GO" id="GO:0005840">
    <property type="term" value="C:ribosome"/>
    <property type="evidence" value="ECO:0007669"/>
    <property type="project" value="UniProtKB-KW"/>
</dbReference>
<dbReference type="GO" id="GO:0003735">
    <property type="term" value="F:structural constituent of ribosome"/>
    <property type="evidence" value="ECO:0007669"/>
    <property type="project" value="InterPro"/>
</dbReference>
<dbReference type="GO" id="GO:0006412">
    <property type="term" value="P:translation"/>
    <property type="evidence" value="ECO:0007669"/>
    <property type="project" value="UniProtKB-UniRule"/>
</dbReference>
<dbReference type="HAMAP" id="MF_00251">
    <property type="entry name" value="Ribosomal_bL36"/>
    <property type="match status" value="1"/>
</dbReference>
<dbReference type="InterPro" id="IPR000473">
    <property type="entry name" value="Ribosomal_bL36"/>
</dbReference>
<dbReference type="InterPro" id="IPR035977">
    <property type="entry name" value="Ribosomal_bL36_sp"/>
</dbReference>
<dbReference type="NCBIfam" id="TIGR01022">
    <property type="entry name" value="rpmJ_bact"/>
    <property type="match status" value="1"/>
</dbReference>
<dbReference type="PANTHER" id="PTHR42888">
    <property type="entry name" value="50S RIBOSOMAL PROTEIN L36, CHLOROPLASTIC"/>
    <property type="match status" value="1"/>
</dbReference>
<dbReference type="PANTHER" id="PTHR42888:SF1">
    <property type="entry name" value="LARGE RIBOSOMAL SUBUNIT PROTEIN BL36C"/>
    <property type="match status" value="1"/>
</dbReference>
<dbReference type="Pfam" id="PF00444">
    <property type="entry name" value="Ribosomal_L36"/>
    <property type="match status" value="1"/>
</dbReference>
<dbReference type="SUPFAM" id="SSF57840">
    <property type="entry name" value="Ribosomal protein L36"/>
    <property type="match status" value="1"/>
</dbReference>
<dbReference type="PROSITE" id="PS00828">
    <property type="entry name" value="RIBOSOMAL_L36"/>
    <property type="match status" value="1"/>
</dbReference>
<protein>
    <recommendedName>
        <fullName evidence="1">Large ribosomal subunit protein bL36</fullName>
    </recommendedName>
    <alternativeName>
        <fullName evidence="2">50S ribosomal protein L36</fullName>
    </alternativeName>
</protein>
<evidence type="ECO:0000255" key="1">
    <source>
        <dbReference type="HAMAP-Rule" id="MF_00251"/>
    </source>
</evidence>
<evidence type="ECO:0000305" key="2"/>
<comment type="similarity">
    <text evidence="1">Belongs to the bacterial ribosomal protein bL36 family.</text>
</comment>
<feature type="chain" id="PRO_0000344653" description="Large ribosomal subunit protein bL36">
    <location>
        <begin position="1"/>
        <end position="37"/>
    </location>
</feature>
<keyword id="KW-0687">Ribonucleoprotein</keyword>
<keyword id="KW-0689">Ribosomal protein</keyword>
<accession>A4XLQ6</accession>
<organism>
    <name type="scientific">Caldicellulosiruptor saccharolyticus (strain ATCC 43494 / DSM 8903 / Tp8T 6331)</name>
    <dbReference type="NCBI Taxonomy" id="351627"/>
    <lineage>
        <taxon>Bacteria</taxon>
        <taxon>Bacillati</taxon>
        <taxon>Bacillota</taxon>
        <taxon>Bacillota incertae sedis</taxon>
        <taxon>Caldicellulosiruptorales</taxon>
        <taxon>Caldicellulosiruptoraceae</taxon>
        <taxon>Caldicellulosiruptor</taxon>
    </lineage>
</organism>
<reference key="1">
    <citation type="submission" date="2007-04" db="EMBL/GenBank/DDBJ databases">
        <title>Genome sequence of the thermophilic hydrogen-producing bacterium Caldicellulosiruptor saccharolyticus DSM 8903.</title>
        <authorList>
            <person name="Copeland A."/>
            <person name="Lucas S."/>
            <person name="Lapidus A."/>
            <person name="Barry K."/>
            <person name="Detter J.C."/>
            <person name="Glavina del Rio T."/>
            <person name="Hammon N."/>
            <person name="Israni S."/>
            <person name="Dalin E."/>
            <person name="Tice H."/>
            <person name="Pitluck S."/>
            <person name="Kiss H."/>
            <person name="Brettin T."/>
            <person name="Bruce D."/>
            <person name="Han C."/>
            <person name="Schmutz J."/>
            <person name="Larimer F."/>
            <person name="Land M."/>
            <person name="Hauser L."/>
            <person name="Kyrpides N."/>
            <person name="Lykidis A."/>
            <person name="van de Werken H.J.G."/>
            <person name="Verhaart M.R.A."/>
            <person name="VanFossen A.L."/>
            <person name="Lewis D.L."/>
            <person name="Nichols J.D."/>
            <person name="Goorissen H.P."/>
            <person name="van Niel E.W.J."/>
            <person name="Stams F.J.M."/>
            <person name="Willquist K.U."/>
            <person name="Ward D.E."/>
            <person name="van der Oost J."/>
            <person name="Kelly R.M."/>
            <person name="Kengen S.M.W."/>
            <person name="Richardson P."/>
        </authorList>
    </citation>
    <scope>NUCLEOTIDE SEQUENCE [LARGE SCALE GENOMIC DNA]</scope>
    <source>
        <strain>ATCC 43494 / DSM 8903 / Tp8T 6331</strain>
    </source>
</reference>
<proteinExistence type="inferred from homology"/>
<gene>
    <name evidence="1" type="primary">rpmJ</name>
    <name type="ordered locus">Csac_2263</name>
</gene>